<accession>A7I0P8</accession>
<gene>
    <name evidence="1" type="primary">panC</name>
    <name type="ordered locus">CHAB381_0501</name>
</gene>
<protein>
    <recommendedName>
        <fullName evidence="1">Pantothenate synthetase</fullName>
        <shortName evidence="1">PS</shortName>
        <ecNumber evidence="1">6.3.2.1</ecNumber>
    </recommendedName>
    <alternativeName>
        <fullName evidence="1">Pantoate--beta-alanine ligase</fullName>
    </alternativeName>
    <alternativeName>
        <fullName evidence="1">Pantoate-activating enzyme</fullName>
    </alternativeName>
</protein>
<keyword id="KW-0067">ATP-binding</keyword>
<keyword id="KW-0963">Cytoplasm</keyword>
<keyword id="KW-0436">Ligase</keyword>
<keyword id="KW-0547">Nucleotide-binding</keyword>
<keyword id="KW-0566">Pantothenate biosynthesis</keyword>
<keyword id="KW-1185">Reference proteome</keyword>
<proteinExistence type="inferred from homology"/>
<evidence type="ECO:0000255" key="1">
    <source>
        <dbReference type="HAMAP-Rule" id="MF_00158"/>
    </source>
</evidence>
<sequence>MEILRTTDELRKFRAAVSQKVGFVPTMGALHAGHISLIKRCKDENEITIVSTFVNPTQFLAGEDLDKYPKNEAADIKICENLEVDAIFIPKADEFYEDDEPKISAPKSLSAILEGATRPGHFDGVLQVLNKLFNLTKPKNVYMGKKDAQQLTIVRNMVQNFFMDINVNACEIVRENDGLALSSRNIYLDEEQKMLALKLSRSLLKAKNLVDASETDINVIKTAMLKILEPLKVDYIAFVDRNFKEISKIEVGNSIILVAAYVDKTRLIDNIWL</sequence>
<dbReference type="EC" id="6.3.2.1" evidence="1"/>
<dbReference type="EMBL" id="CP000776">
    <property type="protein sequence ID" value="ABS51356.1"/>
    <property type="molecule type" value="Genomic_DNA"/>
</dbReference>
<dbReference type="RefSeq" id="WP_012108374.1">
    <property type="nucleotide sequence ID" value="NC_009714.1"/>
</dbReference>
<dbReference type="SMR" id="A7I0P8"/>
<dbReference type="STRING" id="360107.CHAB381_0501"/>
<dbReference type="KEGG" id="cha:CHAB381_0501"/>
<dbReference type="eggNOG" id="COG0414">
    <property type="taxonomic scope" value="Bacteria"/>
</dbReference>
<dbReference type="HOGENOM" id="CLU_047148_0_0_7"/>
<dbReference type="OrthoDB" id="9773087at2"/>
<dbReference type="UniPathway" id="UPA00028">
    <property type="reaction ID" value="UER00005"/>
</dbReference>
<dbReference type="Proteomes" id="UP000002407">
    <property type="component" value="Chromosome"/>
</dbReference>
<dbReference type="GO" id="GO:0005829">
    <property type="term" value="C:cytosol"/>
    <property type="evidence" value="ECO:0007669"/>
    <property type="project" value="TreeGrafter"/>
</dbReference>
<dbReference type="GO" id="GO:0005524">
    <property type="term" value="F:ATP binding"/>
    <property type="evidence" value="ECO:0007669"/>
    <property type="project" value="UniProtKB-KW"/>
</dbReference>
<dbReference type="GO" id="GO:0004592">
    <property type="term" value="F:pantoate-beta-alanine ligase activity"/>
    <property type="evidence" value="ECO:0007669"/>
    <property type="project" value="UniProtKB-UniRule"/>
</dbReference>
<dbReference type="GO" id="GO:0015940">
    <property type="term" value="P:pantothenate biosynthetic process"/>
    <property type="evidence" value="ECO:0007669"/>
    <property type="project" value="UniProtKB-UniRule"/>
</dbReference>
<dbReference type="CDD" id="cd00560">
    <property type="entry name" value="PanC"/>
    <property type="match status" value="1"/>
</dbReference>
<dbReference type="Gene3D" id="3.40.50.620">
    <property type="entry name" value="HUPs"/>
    <property type="match status" value="1"/>
</dbReference>
<dbReference type="Gene3D" id="3.30.1300.10">
    <property type="entry name" value="Pantoate-beta-alanine ligase, C-terminal domain"/>
    <property type="match status" value="1"/>
</dbReference>
<dbReference type="HAMAP" id="MF_00158">
    <property type="entry name" value="PanC"/>
    <property type="match status" value="1"/>
</dbReference>
<dbReference type="InterPro" id="IPR003721">
    <property type="entry name" value="Pantoate_ligase"/>
</dbReference>
<dbReference type="InterPro" id="IPR042176">
    <property type="entry name" value="Pantoate_ligase_C"/>
</dbReference>
<dbReference type="InterPro" id="IPR014729">
    <property type="entry name" value="Rossmann-like_a/b/a_fold"/>
</dbReference>
<dbReference type="NCBIfam" id="TIGR00018">
    <property type="entry name" value="panC"/>
    <property type="match status" value="1"/>
</dbReference>
<dbReference type="PANTHER" id="PTHR21299">
    <property type="entry name" value="CYTIDYLATE KINASE/PANTOATE-BETA-ALANINE LIGASE"/>
    <property type="match status" value="1"/>
</dbReference>
<dbReference type="PANTHER" id="PTHR21299:SF1">
    <property type="entry name" value="PANTOATE--BETA-ALANINE LIGASE"/>
    <property type="match status" value="1"/>
</dbReference>
<dbReference type="Pfam" id="PF02569">
    <property type="entry name" value="Pantoate_ligase"/>
    <property type="match status" value="1"/>
</dbReference>
<dbReference type="SUPFAM" id="SSF52374">
    <property type="entry name" value="Nucleotidylyl transferase"/>
    <property type="match status" value="1"/>
</dbReference>
<feature type="chain" id="PRO_1000076848" description="Pantothenate synthetase">
    <location>
        <begin position="1"/>
        <end position="273"/>
    </location>
</feature>
<feature type="active site" description="Proton donor" evidence="1">
    <location>
        <position position="34"/>
    </location>
</feature>
<feature type="binding site" evidence="1">
    <location>
        <begin position="27"/>
        <end position="34"/>
    </location>
    <ligand>
        <name>ATP</name>
        <dbReference type="ChEBI" id="CHEBI:30616"/>
    </ligand>
</feature>
<feature type="binding site" evidence="1">
    <location>
        <position position="58"/>
    </location>
    <ligand>
        <name>(R)-pantoate</name>
        <dbReference type="ChEBI" id="CHEBI:15980"/>
    </ligand>
</feature>
<feature type="binding site" evidence="1">
    <location>
        <position position="58"/>
    </location>
    <ligand>
        <name>beta-alanine</name>
        <dbReference type="ChEBI" id="CHEBI:57966"/>
    </ligand>
</feature>
<feature type="binding site" evidence="1">
    <location>
        <begin position="144"/>
        <end position="147"/>
    </location>
    <ligand>
        <name>ATP</name>
        <dbReference type="ChEBI" id="CHEBI:30616"/>
    </ligand>
</feature>
<feature type="binding site" evidence="1">
    <location>
        <position position="150"/>
    </location>
    <ligand>
        <name>(R)-pantoate</name>
        <dbReference type="ChEBI" id="CHEBI:15980"/>
    </ligand>
</feature>
<feature type="binding site" evidence="1">
    <location>
        <position position="173"/>
    </location>
    <ligand>
        <name>ATP</name>
        <dbReference type="ChEBI" id="CHEBI:30616"/>
    </ligand>
</feature>
<feature type="binding site" evidence="1">
    <location>
        <begin position="181"/>
        <end position="184"/>
    </location>
    <ligand>
        <name>ATP</name>
        <dbReference type="ChEBI" id="CHEBI:30616"/>
    </ligand>
</feature>
<reference key="1">
    <citation type="submission" date="2007-07" db="EMBL/GenBank/DDBJ databases">
        <title>Complete genome sequence of Campylobacter hominis ATCC BAA-381, a commensal isolated from the human gastrointestinal tract.</title>
        <authorList>
            <person name="Fouts D.E."/>
            <person name="Mongodin E.F."/>
            <person name="Puiu D."/>
            <person name="Sebastian Y."/>
            <person name="Miller W.G."/>
            <person name="Mandrell R.E."/>
            <person name="Nelson K.E."/>
        </authorList>
    </citation>
    <scope>NUCLEOTIDE SEQUENCE [LARGE SCALE GENOMIC DNA]</scope>
    <source>
        <strain>ATCC BAA-381 / DSM 21671 / CCUG 45161 / LMG 19568 / NCTC 13146 / CH001A</strain>
    </source>
</reference>
<comment type="function">
    <text evidence="1">Catalyzes the condensation of pantoate with beta-alanine in an ATP-dependent reaction via a pantoyl-adenylate intermediate.</text>
</comment>
<comment type="catalytic activity">
    <reaction evidence="1">
        <text>(R)-pantoate + beta-alanine + ATP = (R)-pantothenate + AMP + diphosphate + H(+)</text>
        <dbReference type="Rhea" id="RHEA:10912"/>
        <dbReference type="ChEBI" id="CHEBI:15378"/>
        <dbReference type="ChEBI" id="CHEBI:15980"/>
        <dbReference type="ChEBI" id="CHEBI:29032"/>
        <dbReference type="ChEBI" id="CHEBI:30616"/>
        <dbReference type="ChEBI" id="CHEBI:33019"/>
        <dbReference type="ChEBI" id="CHEBI:57966"/>
        <dbReference type="ChEBI" id="CHEBI:456215"/>
        <dbReference type="EC" id="6.3.2.1"/>
    </reaction>
</comment>
<comment type="pathway">
    <text evidence="1">Cofactor biosynthesis; (R)-pantothenate biosynthesis; (R)-pantothenate from (R)-pantoate and beta-alanine: step 1/1.</text>
</comment>
<comment type="subunit">
    <text evidence="1">Homodimer.</text>
</comment>
<comment type="subcellular location">
    <subcellularLocation>
        <location evidence="1">Cytoplasm</location>
    </subcellularLocation>
</comment>
<comment type="miscellaneous">
    <text evidence="1">The reaction proceeds by a bi uni uni bi ping pong mechanism.</text>
</comment>
<comment type="similarity">
    <text evidence="1">Belongs to the pantothenate synthetase family.</text>
</comment>
<name>PANC_CAMHC</name>
<organism>
    <name type="scientific">Campylobacter hominis (strain ATCC BAA-381 / DSM 21671 / CCUG 45161 / LMG 19568 / NCTC 13146 / CH001A)</name>
    <dbReference type="NCBI Taxonomy" id="360107"/>
    <lineage>
        <taxon>Bacteria</taxon>
        <taxon>Pseudomonadati</taxon>
        <taxon>Campylobacterota</taxon>
        <taxon>Epsilonproteobacteria</taxon>
        <taxon>Campylobacterales</taxon>
        <taxon>Campylobacteraceae</taxon>
        <taxon>Campylobacter</taxon>
    </lineage>
</organism>